<gene>
    <name evidence="10" type="primary">MEIOB</name>
    <name type="synonym">C16orf73</name>
</gene>
<sequence length="442" mass="49313">MANSFAARIFTTLSDLQTNMANLKVIGIVIGKTDVKGFPDRKNIGSERYTFSFTIRDSPAHFVNAASWGNEDYIKSLSDSFRVGDCVIIENPLIQRKEIEREEKFSPATPSNCKLLLSENHSTVKVCSSYEVDTKLLSLIHLPVKESHDYYSLGDIVANGHSLNGRIINVLAAVKSVGEPKYFTTSDRRKGQRCEVRLYDETESSFAMTCWDNESILLAQSWMPRETVIFASDVRINFDKFRNCMTATVISKTIITTNPDIPEANILLNFIRENKETNVLDDEIDSYFKESINLSTIVDVYTVEQLKGKALKNEGKADPSYGILYAYISTLNIDDETTKVVRNRCSSCGYIVNEASNMCTTCNKNSLDFKSVFLSFHVLIDLTDHTGTLHSCSLTGSVAEETLGCTFVLSHRARSGLKISVLSCKLADPTEASRNLSGQKHV</sequence>
<protein>
    <recommendedName>
        <fullName evidence="9">Meiosis-specific with OB domain-containing protein</fullName>
        <ecNumber>3.1.-.-</ecNumber>
    </recommendedName>
</protein>
<dbReference type="EC" id="3.1.-.-"/>
<dbReference type="EMBL" id="AE006639">
    <property type="protein sequence ID" value="AAK61296.1"/>
    <property type="status" value="ALT_SEQ"/>
    <property type="molecule type" value="Genomic_DNA"/>
</dbReference>
<dbReference type="EMBL" id="AL031722">
    <property type="protein sequence ID" value="CAM26474.1"/>
    <property type="molecule type" value="Genomic_DNA"/>
</dbReference>
<dbReference type="EMBL" id="AL499628">
    <property type="protein sequence ID" value="CAM26474.1"/>
    <property type="status" value="JOINED"/>
    <property type="molecule type" value="Genomic_DNA"/>
</dbReference>
<dbReference type="EMBL" id="AL499628">
    <property type="protein sequence ID" value="CAM28376.1"/>
    <property type="molecule type" value="Genomic_DNA"/>
</dbReference>
<dbReference type="EMBL" id="AL031722">
    <property type="protein sequence ID" value="CAM28376.1"/>
    <property type="status" value="JOINED"/>
    <property type="molecule type" value="Genomic_DNA"/>
</dbReference>
<dbReference type="EMBL" id="AL132823">
    <property type="status" value="NOT_ANNOTATED_CDS"/>
    <property type="molecule type" value="Genomic_DNA"/>
</dbReference>
<dbReference type="EMBL" id="BC029829">
    <property type="protein sequence ID" value="AAH29829.1"/>
    <property type="status" value="ALT_INIT"/>
    <property type="molecule type" value="mRNA"/>
</dbReference>
<dbReference type="CCDS" id="CCDS10449.2">
    <molecule id="Q8N635-1"/>
</dbReference>
<dbReference type="CCDS" id="CCDS53983.1">
    <molecule id="Q8N635-2"/>
</dbReference>
<dbReference type="RefSeq" id="NP_001157032.1">
    <molecule id="Q8N635-2"/>
    <property type="nucleotide sequence ID" value="NM_001163560.3"/>
</dbReference>
<dbReference type="RefSeq" id="NP_689977.2">
    <molecule id="Q8N635-1"/>
    <property type="nucleotide sequence ID" value="NM_152764.3"/>
</dbReference>
<dbReference type="SMR" id="Q8N635"/>
<dbReference type="BioGRID" id="129038">
    <property type="interactions" value="6"/>
</dbReference>
<dbReference type="FunCoup" id="Q8N635">
    <property type="interactions" value="575"/>
</dbReference>
<dbReference type="IntAct" id="Q8N635">
    <property type="interactions" value="2"/>
</dbReference>
<dbReference type="MINT" id="Q8N635"/>
<dbReference type="STRING" id="9606.ENSP00000314484"/>
<dbReference type="GlyGen" id="Q8N635">
    <property type="glycosylation" value="3 sites, 1 O-linked glycan (2 sites)"/>
</dbReference>
<dbReference type="iPTMnet" id="Q8N635"/>
<dbReference type="PhosphoSitePlus" id="Q8N635"/>
<dbReference type="BioMuta" id="MEIOB"/>
<dbReference type="DMDM" id="229462984"/>
<dbReference type="MassIVE" id="Q8N635"/>
<dbReference type="PaxDb" id="9606-ENSP00000390778"/>
<dbReference type="PeptideAtlas" id="Q8N635"/>
<dbReference type="ProteomicsDB" id="72128">
    <molecule id="Q8N635-1"/>
</dbReference>
<dbReference type="ProteomicsDB" id="7972"/>
<dbReference type="Pumba" id="Q8N635"/>
<dbReference type="Antibodypedia" id="42506">
    <property type="antibodies" value="38 antibodies from 12 providers"/>
</dbReference>
<dbReference type="DNASU" id="254528"/>
<dbReference type="Ensembl" id="ENST00000325962.9">
    <molecule id="Q8N635-2"/>
    <property type="protein sequence ID" value="ENSP00000314484.3"/>
    <property type="gene ID" value="ENSG00000162039.19"/>
</dbReference>
<dbReference type="Ensembl" id="ENST00000397344.7">
    <molecule id="Q8N635-1"/>
    <property type="protein sequence ID" value="ENSP00000380504.3"/>
    <property type="gene ID" value="ENSG00000162039.19"/>
</dbReference>
<dbReference type="GeneID" id="254528"/>
<dbReference type="KEGG" id="hsa:254528"/>
<dbReference type="MANE-Select" id="ENST00000325962.9">
    <molecule id="Q8N635-2"/>
    <property type="protein sequence ID" value="ENSP00000314484.3"/>
    <property type="RefSeq nucleotide sequence ID" value="NM_001163560.3"/>
    <property type="RefSeq protein sequence ID" value="NP_001157032.1"/>
</dbReference>
<dbReference type="UCSC" id="uc002cne.3">
    <molecule id="Q8N635-1"/>
    <property type="organism name" value="human"/>
</dbReference>
<dbReference type="AGR" id="HGNC:28569"/>
<dbReference type="CTD" id="254528"/>
<dbReference type="DisGeNET" id="254528"/>
<dbReference type="GeneCards" id="MEIOB"/>
<dbReference type="HGNC" id="HGNC:28569">
    <property type="gene designation" value="MEIOB"/>
</dbReference>
<dbReference type="HPA" id="ENSG00000162039">
    <property type="expression patterns" value="Tissue enriched (testis)"/>
</dbReference>
<dbReference type="MalaCards" id="MEIOB"/>
<dbReference type="MIM" id="617670">
    <property type="type" value="gene"/>
</dbReference>
<dbReference type="MIM" id="617706">
    <property type="type" value="phenotype"/>
</dbReference>
<dbReference type="MIM" id="620686">
    <property type="type" value="phenotype"/>
</dbReference>
<dbReference type="neXtProt" id="NX_Q8N635"/>
<dbReference type="OpenTargets" id="ENSG00000162039"/>
<dbReference type="Orphanet" id="399805">
    <property type="disease" value="Male infertility with azoospermia or oligozoospermia due to single gene mutation"/>
</dbReference>
<dbReference type="PharmGKB" id="PA145149601"/>
<dbReference type="VEuPathDB" id="HostDB:ENSG00000162039"/>
<dbReference type="eggNOG" id="KOG0851">
    <property type="taxonomic scope" value="Eukaryota"/>
</dbReference>
<dbReference type="GeneTree" id="ENSGT00390000001723"/>
<dbReference type="HOGENOM" id="CLU_042457_2_0_1"/>
<dbReference type="InParanoid" id="Q8N635"/>
<dbReference type="OMA" id="IYLKFVV"/>
<dbReference type="PAN-GO" id="Q8N635">
    <property type="GO annotations" value="3 GO annotations based on evolutionary models"/>
</dbReference>
<dbReference type="PhylomeDB" id="Q8N635"/>
<dbReference type="TreeFam" id="TF323670"/>
<dbReference type="PathwayCommons" id="Q8N635"/>
<dbReference type="SignaLink" id="Q8N635"/>
<dbReference type="BioGRID-ORCS" id="254528">
    <property type="hits" value="21 hits in 1158 CRISPR screens"/>
</dbReference>
<dbReference type="ChiTaRS" id="MEIOB">
    <property type="organism name" value="human"/>
</dbReference>
<dbReference type="GenomeRNAi" id="254528"/>
<dbReference type="Pharos" id="Q8N635">
    <property type="development level" value="Tdark"/>
</dbReference>
<dbReference type="PRO" id="PR:Q8N635"/>
<dbReference type="Proteomes" id="UP000005640">
    <property type="component" value="Chromosome 16"/>
</dbReference>
<dbReference type="RNAct" id="Q8N635">
    <property type="molecule type" value="protein"/>
</dbReference>
<dbReference type="Bgee" id="ENSG00000162039">
    <property type="expression patterns" value="Expressed in right testis and 100 other cell types or tissues"/>
</dbReference>
<dbReference type="ExpressionAtlas" id="Q8N635">
    <property type="expression patterns" value="baseline and differential"/>
</dbReference>
<dbReference type="GO" id="GO:0005694">
    <property type="term" value="C:chromosome"/>
    <property type="evidence" value="ECO:0007669"/>
    <property type="project" value="UniProtKB-SubCell"/>
</dbReference>
<dbReference type="GO" id="GO:0005737">
    <property type="term" value="C:cytoplasm"/>
    <property type="evidence" value="ECO:0000250"/>
    <property type="project" value="UniProtKB"/>
</dbReference>
<dbReference type="GO" id="GO:0005634">
    <property type="term" value="C:nucleus"/>
    <property type="evidence" value="ECO:0000315"/>
    <property type="project" value="UniProtKB"/>
</dbReference>
<dbReference type="GO" id="GO:0003682">
    <property type="term" value="F:chromatin binding"/>
    <property type="evidence" value="ECO:0000250"/>
    <property type="project" value="UniProtKB"/>
</dbReference>
<dbReference type="GO" id="GO:0008310">
    <property type="term" value="F:single-stranded DNA 3'-5' DNA exonuclease activity"/>
    <property type="evidence" value="ECO:0000250"/>
    <property type="project" value="UniProtKB"/>
</dbReference>
<dbReference type="GO" id="GO:0003697">
    <property type="term" value="F:single-stranded DNA binding"/>
    <property type="evidence" value="ECO:0000250"/>
    <property type="project" value="UniProtKB"/>
</dbReference>
<dbReference type="GO" id="GO:0000724">
    <property type="term" value="P:double-strand break repair via homologous recombination"/>
    <property type="evidence" value="ECO:0000250"/>
    <property type="project" value="UniProtKB"/>
</dbReference>
<dbReference type="GO" id="GO:0007144">
    <property type="term" value="P:female meiosis I"/>
    <property type="evidence" value="ECO:0000250"/>
    <property type="project" value="UniProtKB"/>
</dbReference>
<dbReference type="GO" id="GO:0009566">
    <property type="term" value="P:fertilization"/>
    <property type="evidence" value="ECO:0000250"/>
    <property type="project" value="UniProtKB"/>
</dbReference>
<dbReference type="GO" id="GO:0007129">
    <property type="term" value="P:homologous chromosome pairing at meiosis"/>
    <property type="evidence" value="ECO:0000250"/>
    <property type="project" value="UniProtKB"/>
</dbReference>
<dbReference type="GO" id="GO:0007141">
    <property type="term" value="P:male meiosis I"/>
    <property type="evidence" value="ECO:0007669"/>
    <property type="project" value="Ensembl"/>
</dbReference>
<dbReference type="GO" id="GO:0007140">
    <property type="term" value="P:male meiotic nuclear division"/>
    <property type="evidence" value="ECO:0000250"/>
    <property type="project" value="UniProtKB"/>
</dbReference>
<dbReference type="GO" id="GO:0000712">
    <property type="term" value="P:resolution of meiotic recombination intermediates"/>
    <property type="evidence" value="ECO:0000250"/>
    <property type="project" value="UniProtKB"/>
</dbReference>
<dbReference type="CDD" id="cd04475">
    <property type="entry name" value="RPA1_DBD_B"/>
    <property type="match status" value="1"/>
</dbReference>
<dbReference type="FunFam" id="2.40.50.140:FF:000239">
    <property type="entry name" value="Meiosis specific with OB domains"/>
    <property type="match status" value="1"/>
</dbReference>
<dbReference type="FunFam" id="2.40.50.140:FF:000248">
    <property type="entry name" value="Meiosis specific with OB domains"/>
    <property type="match status" value="1"/>
</dbReference>
<dbReference type="FunFam" id="2.40.50.140:FF:000171">
    <property type="entry name" value="meiosis-specific with OB domain-containing protein isoform X1"/>
    <property type="match status" value="1"/>
</dbReference>
<dbReference type="Gene3D" id="2.40.50.140">
    <property type="entry name" value="Nucleic acid-binding proteins"/>
    <property type="match status" value="3"/>
</dbReference>
<dbReference type="InterPro" id="IPR052469">
    <property type="entry name" value="MEIOB"/>
</dbReference>
<dbReference type="InterPro" id="IPR012340">
    <property type="entry name" value="NA-bd_OB-fold"/>
</dbReference>
<dbReference type="InterPro" id="IPR056880">
    <property type="entry name" value="OB_MEIOB_N"/>
</dbReference>
<dbReference type="PANTHER" id="PTHR21166">
    <property type="entry name" value="CELL DIVISION CONTROL PROTEIN 24 OB DOMAIN-CONTAINING PROTEIN-RELATED"/>
    <property type="match status" value="1"/>
</dbReference>
<dbReference type="PANTHER" id="PTHR21166:SF2">
    <property type="entry name" value="CELL DIVISION CONTROL PROTEIN 24 OB DOMAIN-CONTAINING PROTEIN-RELATED"/>
    <property type="match status" value="1"/>
</dbReference>
<dbReference type="Pfam" id="PF24903">
    <property type="entry name" value="OB_MEIOB_N"/>
    <property type="match status" value="1"/>
</dbReference>
<dbReference type="SUPFAM" id="SSF50249">
    <property type="entry name" value="Nucleic acid-binding proteins"/>
    <property type="match status" value="2"/>
</dbReference>
<proteinExistence type="evidence at protein level"/>
<feature type="chain" id="PRO_0000337134" description="Meiosis-specific with OB domain-containing protein">
    <location>
        <begin position="1"/>
        <end position="442"/>
    </location>
</feature>
<feature type="DNA-binding region" description="OB">
    <location>
        <begin position="167"/>
        <end position="272"/>
    </location>
</feature>
<feature type="splice variant" id="VSP_047664" description="In isoform 2." evidence="9">
    <original>T</original>
    <variation>TVHEFLAMTDEQKTALKWQFLLERSKIYLK</variation>
    <location>
        <position position="406"/>
    </location>
</feature>
<feature type="sequence variant" id="VAR_061619" description="In dbSNP:rs1742446.">
    <original>T</original>
    <variation>P</variation>
    <location>
        <position position="18"/>
    </location>
</feature>
<feature type="sequence variant" id="VAR_080034" description="In SPGF22; dbSNP:rs1555472691." evidence="3">
    <original>N</original>
    <variation>I</variation>
    <location>
        <position position="64"/>
    </location>
</feature>
<feature type="sequence variant" id="VAR_059624" description="In dbSNP:rs1657125.">
    <original>K</original>
    <variation>T</variation>
    <location>
        <position position="75"/>
    </location>
</feature>
<feature type="sequence variant" id="VAR_043620" description="In dbSNP:rs9806945.">
    <original>I</original>
    <variation>T</variation>
    <location>
        <position position="261"/>
    </location>
</feature>
<feature type="sequence variant" id="VAR_089343" description="In SPGF22 and POF23; likely pathogenic; not located in the nucleus; loss of interaction with SPATA22." evidence="7 8">
    <location>
        <begin position="272"/>
        <end position="442"/>
    </location>
</feature>
<feature type="sequence variant" id="VAR_089344" description="In SPGF22; uncertain significance; decreased interaction with SPATA22." evidence="8">
    <original>A</original>
    <variation>T</variation>
    <location>
        <position position="326"/>
    </location>
</feature>
<accession>Q8N635</accession>
<accession>B1AK39</accession>
<accession>C9J0S1</accession>
<accession>Q96RY0</accession>
<evidence type="ECO:0000250" key="1">
    <source>
        <dbReference type="UniProtKB" id="Q9D513"/>
    </source>
</evidence>
<evidence type="ECO:0000269" key="2">
    <source>
    </source>
</evidence>
<evidence type="ECO:0000269" key="3">
    <source>
    </source>
</evidence>
<evidence type="ECO:0000269" key="4">
    <source>
    </source>
</evidence>
<evidence type="ECO:0000269" key="5">
    <source>
    </source>
</evidence>
<evidence type="ECO:0000269" key="6">
    <source>
    </source>
</evidence>
<evidence type="ECO:0000269" key="7">
    <source>
    </source>
</evidence>
<evidence type="ECO:0000269" key="8">
    <source>
    </source>
</evidence>
<evidence type="ECO:0000305" key="9"/>
<evidence type="ECO:0000312" key="10">
    <source>
        <dbReference type="HGNC" id="HGNC:28569"/>
    </source>
</evidence>
<organism>
    <name type="scientific">Homo sapiens</name>
    <name type="common">Human</name>
    <dbReference type="NCBI Taxonomy" id="9606"/>
    <lineage>
        <taxon>Eukaryota</taxon>
        <taxon>Metazoa</taxon>
        <taxon>Chordata</taxon>
        <taxon>Craniata</taxon>
        <taxon>Vertebrata</taxon>
        <taxon>Euteleostomi</taxon>
        <taxon>Mammalia</taxon>
        <taxon>Eutheria</taxon>
        <taxon>Euarchontoglires</taxon>
        <taxon>Primates</taxon>
        <taxon>Haplorrhini</taxon>
        <taxon>Catarrhini</taxon>
        <taxon>Hominidae</taxon>
        <taxon>Homo</taxon>
    </lineage>
</organism>
<keyword id="KW-0025">Alternative splicing</keyword>
<keyword id="KW-0158">Chromosome</keyword>
<keyword id="KW-0963">Cytoplasm</keyword>
<keyword id="KW-0225">Disease variant</keyword>
<keyword id="KW-0238">DNA-binding</keyword>
<keyword id="KW-0269">Exonuclease</keyword>
<keyword id="KW-0378">Hydrolase</keyword>
<keyword id="KW-0469">Meiosis</keyword>
<keyword id="KW-0540">Nuclease</keyword>
<keyword id="KW-0539">Nucleus</keyword>
<keyword id="KW-1066">Premature ovarian failure</keyword>
<keyword id="KW-1267">Proteomics identification</keyword>
<keyword id="KW-1185">Reference proteome</keyword>
<reference key="1">
    <citation type="journal article" date="2001" name="Hum. Mol. Genet.">
        <title>Sequence, structure and pathology of the fully annotated terminal 2 Mb of the short arm of human chromosome 16.</title>
        <authorList>
            <person name="Daniels R.J."/>
            <person name="Peden J.F."/>
            <person name="Lloyd C."/>
            <person name="Horsley S.W."/>
            <person name="Clark K."/>
            <person name="Tufarelli C."/>
            <person name="Kearney L."/>
            <person name="Buckle V.J."/>
            <person name="Doggett N.A."/>
            <person name="Flint J."/>
            <person name="Higgs D.R."/>
        </authorList>
    </citation>
    <scope>NUCLEOTIDE SEQUENCE [LARGE SCALE GENOMIC DNA]</scope>
</reference>
<reference key="2">
    <citation type="journal article" date="2004" name="Nature">
        <title>The sequence and analysis of duplication-rich human chromosome 16.</title>
        <authorList>
            <person name="Martin J."/>
            <person name="Han C."/>
            <person name="Gordon L.A."/>
            <person name="Terry A."/>
            <person name="Prabhakar S."/>
            <person name="She X."/>
            <person name="Xie G."/>
            <person name="Hellsten U."/>
            <person name="Chan Y.M."/>
            <person name="Altherr M."/>
            <person name="Couronne O."/>
            <person name="Aerts A."/>
            <person name="Bajorek E."/>
            <person name="Black S."/>
            <person name="Blumer H."/>
            <person name="Branscomb E."/>
            <person name="Brown N.C."/>
            <person name="Bruno W.J."/>
            <person name="Buckingham J.M."/>
            <person name="Callen D.F."/>
            <person name="Campbell C.S."/>
            <person name="Campbell M.L."/>
            <person name="Campbell E.W."/>
            <person name="Caoile C."/>
            <person name="Challacombe J.F."/>
            <person name="Chasteen L.A."/>
            <person name="Chertkov O."/>
            <person name="Chi H.C."/>
            <person name="Christensen M."/>
            <person name="Clark L.M."/>
            <person name="Cohn J.D."/>
            <person name="Denys M."/>
            <person name="Detter J.C."/>
            <person name="Dickson M."/>
            <person name="Dimitrijevic-Bussod M."/>
            <person name="Escobar J."/>
            <person name="Fawcett J.J."/>
            <person name="Flowers D."/>
            <person name="Fotopulos D."/>
            <person name="Glavina T."/>
            <person name="Gomez M."/>
            <person name="Gonzales E."/>
            <person name="Goodstein D."/>
            <person name="Goodwin L.A."/>
            <person name="Grady D.L."/>
            <person name="Grigoriev I."/>
            <person name="Groza M."/>
            <person name="Hammon N."/>
            <person name="Hawkins T."/>
            <person name="Haydu L."/>
            <person name="Hildebrand C.E."/>
            <person name="Huang W."/>
            <person name="Israni S."/>
            <person name="Jett J."/>
            <person name="Jewett P.B."/>
            <person name="Kadner K."/>
            <person name="Kimball H."/>
            <person name="Kobayashi A."/>
            <person name="Krawczyk M.-C."/>
            <person name="Leyba T."/>
            <person name="Longmire J.L."/>
            <person name="Lopez F."/>
            <person name="Lou Y."/>
            <person name="Lowry S."/>
            <person name="Ludeman T."/>
            <person name="Manohar C.F."/>
            <person name="Mark G.A."/>
            <person name="McMurray K.L."/>
            <person name="Meincke L.J."/>
            <person name="Morgan J."/>
            <person name="Moyzis R.K."/>
            <person name="Mundt M.O."/>
            <person name="Munk A.C."/>
            <person name="Nandkeshwar R.D."/>
            <person name="Pitluck S."/>
            <person name="Pollard M."/>
            <person name="Predki P."/>
            <person name="Parson-Quintana B."/>
            <person name="Ramirez L."/>
            <person name="Rash S."/>
            <person name="Retterer J."/>
            <person name="Ricke D.O."/>
            <person name="Robinson D.L."/>
            <person name="Rodriguez A."/>
            <person name="Salamov A."/>
            <person name="Saunders E.H."/>
            <person name="Scott D."/>
            <person name="Shough T."/>
            <person name="Stallings R.L."/>
            <person name="Stalvey M."/>
            <person name="Sutherland R.D."/>
            <person name="Tapia R."/>
            <person name="Tesmer J.G."/>
            <person name="Thayer N."/>
            <person name="Thompson L.S."/>
            <person name="Tice H."/>
            <person name="Torney D.C."/>
            <person name="Tran-Gyamfi M."/>
            <person name="Tsai M."/>
            <person name="Ulanovsky L.E."/>
            <person name="Ustaszewska A."/>
            <person name="Vo N."/>
            <person name="White P.S."/>
            <person name="Williams A.L."/>
            <person name="Wills P.L."/>
            <person name="Wu J.-R."/>
            <person name="Wu K."/>
            <person name="Yang J."/>
            <person name="DeJong P."/>
            <person name="Bruce D."/>
            <person name="Doggett N.A."/>
            <person name="Deaven L."/>
            <person name="Schmutz J."/>
            <person name="Grimwood J."/>
            <person name="Richardson P."/>
            <person name="Rokhsar D.S."/>
            <person name="Eichler E.E."/>
            <person name="Gilna P."/>
            <person name="Lucas S.M."/>
            <person name="Myers R.M."/>
            <person name="Rubin E.M."/>
            <person name="Pennacchio L.A."/>
        </authorList>
    </citation>
    <scope>NUCLEOTIDE SEQUENCE [LARGE SCALE GENOMIC DNA]</scope>
</reference>
<reference key="3">
    <citation type="journal article" date="2004" name="Genome Res.">
        <title>The status, quality, and expansion of the NIH full-length cDNA project: the Mammalian Gene Collection (MGC).</title>
        <authorList>
            <consortium name="The MGC Project Team"/>
        </authorList>
    </citation>
    <scope>NUCLEOTIDE SEQUENCE [LARGE SCALE MRNA] OF 95-442 (ISOFORM 1)</scope>
    <source>
        <tissue>Brain</tissue>
    </source>
</reference>
<reference key="4">
    <citation type="journal article" date="2013" name="PLoS Genet.">
        <title>MEIOB targets single-strand DNA and is necessary for meiotic recombination.</title>
        <authorList>
            <person name="Souquet B."/>
            <person name="Abby E."/>
            <person name="Herve R."/>
            <person name="Finsterbusch F."/>
            <person name="Tourpin S."/>
            <person name="Le Bouffant R."/>
            <person name="Duquenne C."/>
            <person name="Messiaen S."/>
            <person name="Martini E."/>
            <person name="Bernardino-Sgherri J."/>
            <person name="Toth A."/>
            <person name="Habert R."/>
            <person name="Livera G."/>
        </authorList>
    </citation>
    <scope>TISSUE SPECIFICITY</scope>
</reference>
<reference key="5">
    <citation type="journal article" date="2021" name="Hum. Reprod.">
        <title>Whole-exome sequencing of consanguineous families with infertile men and women identifies homologous mutations in SPATA22 and MEIOB.</title>
        <authorList>
            <person name="Wu Y."/>
            <person name="Li Y."/>
            <person name="Murtaza G."/>
            <person name="Zhou J."/>
            <person name="Jiao Y."/>
            <person name="Gong C."/>
            <person name="Hu C."/>
            <person name="Han Q."/>
            <person name="Zhang H."/>
            <person name="Zhang Y."/>
            <person name="Shi B."/>
            <person name="Ma H."/>
            <person name="Jiang X."/>
            <person name="Shi Q."/>
        </authorList>
    </citation>
    <scope>INTERACTION WITH SPATA22</scope>
</reference>
<reference key="6">
    <citation type="journal article" date="2017" name="Genet. Med.">
        <title>A familial study of azoospermic men identifies three novel causative mutations in three new human azoospermia genes.</title>
        <authorList>
            <person name="Gershoni M."/>
            <person name="Hauser R."/>
            <person name="Yogev L."/>
            <person name="Lehavi O."/>
            <person name="Azem F."/>
            <person name="Yavetz H."/>
            <person name="Pietrokovski S."/>
            <person name="Kleiman S.E."/>
        </authorList>
    </citation>
    <scope>VARIANT SPGF22 ILE-64</scope>
    <scope>INVOLVEMENT IN SPGF22</scope>
    <scope>TISSUE SPECIFICITY</scope>
</reference>
<reference key="7">
    <citation type="journal article" date="2019" name="EBioMedicine">
        <title>A truncating MEIOB mutation responsible for familial primary ovarian insufficiency abolishes its interaction with its partner SPATA22 and their recruitment to DNA double-strand breaks.</title>
        <authorList>
            <person name="Caburet S."/>
            <person name="Todeschini A.L."/>
            <person name="Petrillo C."/>
            <person name="Martini E."/>
            <person name="Farran N.D."/>
            <person name="Legois B."/>
            <person name="Livera G."/>
            <person name="Younis J.S."/>
            <person name="Shalev S."/>
            <person name="Veitia R.A."/>
        </authorList>
    </citation>
    <scope>INVOLVEMENT IN POF23</scope>
</reference>
<reference key="8">
    <citation type="journal article" date="2020" name="Genet. Med.">
        <title>Genetic dissection of spermatogenic arrest through exome analysis: clinical implications for the management of azoospermic men.</title>
        <authorList>
            <person name="Krausz C."/>
            <person name="Riera-Escamilla A."/>
            <person name="Moreno-Mendoza D."/>
            <person name="Holleman K."/>
            <person name="Cioppi F."/>
            <person name="Algaba F."/>
            <person name="Pybus M."/>
            <person name="Friedrich C."/>
            <person name="Wyrwoll M.J."/>
            <person name="Casamonti E."/>
            <person name="Pietroforte S."/>
            <person name="Nagirnaja L."/>
            <person name="Lopes A.M."/>
            <person name="Kliesch S."/>
            <person name="Pilatz A."/>
            <person name="Carrell D.T."/>
            <person name="Conrad D.F."/>
            <person name="Ars E."/>
            <person name="Ruiz-Castane E."/>
            <person name="Aston K.I."/>
            <person name="Baarends W.M."/>
            <person name="Tuettelmann F."/>
        </authorList>
    </citation>
    <scope>INVOLVEMENT IN SPGF22</scope>
</reference>
<reference key="9">
    <citation type="journal article" date="2022" name="Front. Genet.">
        <title>Novel MEIOB variants cause primary ovarian insufficiency and non-obstructive azoospermia.</title>
        <authorList>
            <person name="Wang Y."/>
            <person name="Liu L."/>
            <person name="Tan C."/>
            <person name="Meng G."/>
            <person name="Meng L."/>
            <person name="Nie H."/>
            <person name="Du J."/>
            <person name="Lu G.X."/>
            <person name="Lin G."/>
            <person name="He W.B."/>
            <person name="Tan Y.Q."/>
        </authorList>
    </citation>
    <scope>VARIANT POF23 272-ARG--VAL-442 DEL</scope>
    <scope>CHARACTERIZATION OF VARIANT POF23 272-ARG--VAL-442 DEL</scope>
    <scope>SUBCELLULAR LOCATION</scope>
</reference>
<reference key="10">
    <citation type="journal article" date="2024" name="Clin. Genet.">
        <title>Novel MEIOB pathogenic variants including a homozygous non-canonical splicing variant, cause meiotic arrest and human non-obstructive azoospermia.</title>
        <authorList>
            <person name="Zhu X."/>
            <person name="Hu K."/>
            <person name="Cheng H."/>
            <person name="Wu H."/>
            <person name="Li K."/>
            <person name="Gao Y."/>
            <person name="Lv M."/>
            <person name="Xu C."/>
            <person name="Geng H."/>
            <person name="Shen Q."/>
            <person name="Cao Y."/>
            <person name="He X."/>
            <person name="Tang D."/>
            <person name="Guo R."/>
        </authorList>
    </citation>
    <scope>VARIANTS SPGF22 272-ARG--VAL-442 DEL AND THR-326</scope>
    <scope>CHARACTERIZATION OF VARIANTS SPGF22 272-ARG--VAL-442 DEL AND THR-326</scope>
</reference>
<comment type="function">
    <text evidence="1">Single-stranded DNA-binding protein required for homologous recombination in meiosis I. Required for double strand breaks (DSBs) repair and crossover formation and promotion of faithful and complete synapsis. Not required for the initial loading of recombinases but required to maintain a proper number of RAD51 and DMC1 foci after the zygotene stage. May act by ensuring the stabilization of recombinases, which is required for successful homology search and meiotic recombination. Displays Single-stranded DNA 3'-5' exonuclease activity in vitro.</text>
</comment>
<comment type="subunit">
    <text evidence="1 6">Component of a multiprotein complex with RPA2 and SPATA22. Interacts with SPATA22 (PubMed:34392356). Interacts with the complex BRME1:HSF2BP:BRCA2.</text>
</comment>
<comment type="interaction">
    <interactant intactId="EBI-21691881">
        <id>Q8N635</id>
    </interactant>
    <interactant intactId="EBI-1057431">
        <id>O14556</id>
        <label>GAPDHS</label>
    </interactant>
    <organismsDiffer>false</organismsDiffer>
    <experiments>2</experiments>
</comment>
<comment type="subcellular location">
    <subcellularLocation>
        <location evidence="1">Cytoplasm</location>
    </subcellularLocation>
    <subcellularLocation>
        <location evidence="7">Nucleus</location>
    </subcellularLocation>
    <subcellularLocation>
        <location evidence="1">Chromosome</location>
    </subcellularLocation>
    <text evidence="1">Co-localizes with the RPA complex on meiotic chromosome axes. Accumulates on resected DNA. Localization is dependent on SPATA22.</text>
</comment>
<comment type="alternative products">
    <event type="alternative splicing"/>
    <isoform>
        <id>Q8N635-1</id>
        <name>1</name>
        <sequence type="displayed"/>
    </isoform>
    <isoform>
        <id>Q8N635-2</id>
        <name>2</name>
        <sequence type="described" ref="VSP_047664"/>
    </isoform>
</comment>
<comment type="tissue specificity">
    <text evidence="2 3">In fetal gonads, specifically expressed in the ovary starting at the 14th weeks post fertilization (PubMed:24068956). In the adult, restricted to testis (PubMed:28206990).</text>
</comment>
<comment type="disease" evidence="3 5 8">
    <disease id="DI-05083">
        <name>Spermatogenic failure 22</name>
        <acronym>SPGF22</acronym>
        <description>An infertility disorder caused by spermatogenesis defects that result in non-obstructive azoospermia.</description>
        <dbReference type="MIM" id="617706"/>
    </disease>
    <text>The disease is caused by variants affecting the gene represented in this entry.</text>
</comment>
<comment type="disease" evidence="4 7">
    <disease id="DI-06828">
        <name>Premature ovarian failure 23</name>
        <acronym>POF23</acronym>
        <description>A form of premature ovarian failure, an ovarian disorder defined as the cessation of ovarian function under the age of 40 years. It is characterized by oligomenorrhea or amenorrhea, in the presence of elevated levels of serum gonadotropins and low estradiol. POF23 inheritance is autosomal recessive.</description>
        <dbReference type="MIM" id="620686"/>
    </disease>
    <text>The disease is caused by variants affecting the gene represented in this entry.</text>
</comment>
<comment type="similarity">
    <text evidence="9">Belongs to the MEIOB family.</text>
</comment>
<comment type="sequence caution" evidence="9">
    <conflict type="erroneous initiation">
        <sequence resource="EMBL-CDS" id="AAH29829"/>
    </conflict>
    <text>Truncated N-terminus.</text>
</comment>
<comment type="sequence caution" evidence="9">
    <conflict type="erroneous gene model prediction">
        <sequence resource="EMBL-CDS" id="AAK61296"/>
    </conflict>
</comment>
<name>MEIOB_HUMAN</name>